<feature type="chain" id="PRO_1000203858" description="Methionyl-tRNA formyltransferase">
    <location>
        <begin position="1"/>
        <end position="315"/>
    </location>
</feature>
<feature type="binding site" evidence="1">
    <location>
        <begin position="111"/>
        <end position="114"/>
    </location>
    <ligand>
        <name>(6S)-5,6,7,8-tetrahydrofolate</name>
        <dbReference type="ChEBI" id="CHEBI:57453"/>
    </ligand>
</feature>
<reference key="1">
    <citation type="journal article" date="2009" name="Appl. Environ. Microbiol.">
        <title>Novel features of the polysaccharide-digesting gliding bacterium Flavobacterium johnsoniae as revealed by genome sequence analysis.</title>
        <authorList>
            <person name="McBride M.J."/>
            <person name="Xie G."/>
            <person name="Martens E.C."/>
            <person name="Lapidus A."/>
            <person name="Henrissat B."/>
            <person name="Rhodes R.G."/>
            <person name="Goltsman E."/>
            <person name="Wang W."/>
            <person name="Xu J."/>
            <person name="Hunnicutt D.W."/>
            <person name="Staroscik A.M."/>
            <person name="Hoover T.R."/>
            <person name="Cheng Y.Q."/>
            <person name="Stein J.L."/>
        </authorList>
    </citation>
    <scope>NUCLEOTIDE SEQUENCE [LARGE SCALE GENOMIC DNA]</scope>
    <source>
        <strain>ATCC 17061 / DSM 2064 / JCM 8514 / BCRC 14874 / CCUG 350202 / NBRC 14942 / NCIMB 11054 / UW101</strain>
    </source>
</reference>
<gene>
    <name evidence="1" type="primary">fmt</name>
    <name type="ordered locus">Fjoh_0138</name>
</gene>
<sequence length="315" mass="34971">MEKLRIIFMGTPEFAVGILDTIIKNNYDVVGVITAADKPAGRGQKIKYSAVKEYALANNLTLLQPTNLKDESFLAELKALNANLQIVVAFRMLPKVVWEMPNLGTFNLHASLLPNYRGAAPINWAIINGETKTGVTTFFIDDKIDTGAMILNSEIAIEPAENAGQLHDRLMNLGSTTVIDTLKVIENGNVITTIQEDNNDIKTAYKLNKENCKIDWTKSGDEINNLIRGLSPYPAAWCFLKDKNEELSIKIYEAKLLEEAHSYEAGKLISGKKEIKIAIKNGFIQLLSLQLPGKKRMQVAELLNGITFSDEAKVY</sequence>
<evidence type="ECO:0000255" key="1">
    <source>
        <dbReference type="HAMAP-Rule" id="MF_00182"/>
    </source>
</evidence>
<comment type="function">
    <text evidence="1">Attaches a formyl group to the free amino group of methionyl-tRNA(fMet). The formyl group appears to play a dual role in the initiator identity of N-formylmethionyl-tRNA by promoting its recognition by IF2 and preventing the misappropriation of this tRNA by the elongation apparatus.</text>
</comment>
<comment type="catalytic activity">
    <reaction evidence="1">
        <text>L-methionyl-tRNA(fMet) + (6R)-10-formyltetrahydrofolate = N-formyl-L-methionyl-tRNA(fMet) + (6S)-5,6,7,8-tetrahydrofolate + H(+)</text>
        <dbReference type="Rhea" id="RHEA:24380"/>
        <dbReference type="Rhea" id="RHEA-COMP:9952"/>
        <dbReference type="Rhea" id="RHEA-COMP:9953"/>
        <dbReference type="ChEBI" id="CHEBI:15378"/>
        <dbReference type="ChEBI" id="CHEBI:57453"/>
        <dbReference type="ChEBI" id="CHEBI:78530"/>
        <dbReference type="ChEBI" id="CHEBI:78844"/>
        <dbReference type="ChEBI" id="CHEBI:195366"/>
        <dbReference type="EC" id="2.1.2.9"/>
    </reaction>
</comment>
<comment type="similarity">
    <text evidence="1">Belongs to the Fmt family.</text>
</comment>
<name>FMT_FLAJ1</name>
<proteinExistence type="inferred from homology"/>
<keyword id="KW-0648">Protein biosynthesis</keyword>
<keyword id="KW-0808">Transferase</keyword>
<dbReference type="EC" id="2.1.2.9" evidence="1"/>
<dbReference type="EMBL" id="CP000685">
    <property type="protein sequence ID" value="ABQ03176.1"/>
    <property type="molecule type" value="Genomic_DNA"/>
</dbReference>
<dbReference type="RefSeq" id="WP_012022248.1">
    <property type="nucleotide sequence ID" value="NC_009441.1"/>
</dbReference>
<dbReference type="SMR" id="A5FNN7"/>
<dbReference type="STRING" id="376686.Fjoh_0138"/>
<dbReference type="KEGG" id="fjo:Fjoh_0138"/>
<dbReference type="eggNOG" id="COG0223">
    <property type="taxonomic scope" value="Bacteria"/>
</dbReference>
<dbReference type="HOGENOM" id="CLU_033347_1_1_10"/>
<dbReference type="OrthoDB" id="9802815at2"/>
<dbReference type="Proteomes" id="UP000006694">
    <property type="component" value="Chromosome"/>
</dbReference>
<dbReference type="GO" id="GO:0005829">
    <property type="term" value="C:cytosol"/>
    <property type="evidence" value="ECO:0007669"/>
    <property type="project" value="TreeGrafter"/>
</dbReference>
<dbReference type="GO" id="GO:0004479">
    <property type="term" value="F:methionyl-tRNA formyltransferase activity"/>
    <property type="evidence" value="ECO:0007669"/>
    <property type="project" value="UniProtKB-UniRule"/>
</dbReference>
<dbReference type="CDD" id="cd08646">
    <property type="entry name" value="FMT_core_Met-tRNA-FMT_N"/>
    <property type="match status" value="1"/>
</dbReference>
<dbReference type="CDD" id="cd08704">
    <property type="entry name" value="Met_tRNA_FMT_C"/>
    <property type="match status" value="1"/>
</dbReference>
<dbReference type="Gene3D" id="3.40.50.12230">
    <property type="match status" value="1"/>
</dbReference>
<dbReference type="HAMAP" id="MF_00182">
    <property type="entry name" value="Formyl_trans"/>
    <property type="match status" value="1"/>
</dbReference>
<dbReference type="InterPro" id="IPR005794">
    <property type="entry name" value="Fmt"/>
</dbReference>
<dbReference type="InterPro" id="IPR005793">
    <property type="entry name" value="Formyl_trans_C"/>
</dbReference>
<dbReference type="InterPro" id="IPR002376">
    <property type="entry name" value="Formyl_transf_N"/>
</dbReference>
<dbReference type="InterPro" id="IPR036477">
    <property type="entry name" value="Formyl_transf_N_sf"/>
</dbReference>
<dbReference type="InterPro" id="IPR011034">
    <property type="entry name" value="Formyl_transferase-like_C_sf"/>
</dbReference>
<dbReference type="InterPro" id="IPR044135">
    <property type="entry name" value="Met-tRNA-FMT_C"/>
</dbReference>
<dbReference type="InterPro" id="IPR041711">
    <property type="entry name" value="Met-tRNA-FMT_N"/>
</dbReference>
<dbReference type="NCBIfam" id="TIGR00460">
    <property type="entry name" value="fmt"/>
    <property type="match status" value="1"/>
</dbReference>
<dbReference type="PANTHER" id="PTHR11138">
    <property type="entry name" value="METHIONYL-TRNA FORMYLTRANSFERASE"/>
    <property type="match status" value="1"/>
</dbReference>
<dbReference type="PANTHER" id="PTHR11138:SF5">
    <property type="entry name" value="METHIONYL-TRNA FORMYLTRANSFERASE, MITOCHONDRIAL"/>
    <property type="match status" value="1"/>
</dbReference>
<dbReference type="Pfam" id="PF02911">
    <property type="entry name" value="Formyl_trans_C"/>
    <property type="match status" value="1"/>
</dbReference>
<dbReference type="Pfam" id="PF00551">
    <property type="entry name" value="Formyl_trans_N"/>
    <property type="match status" value="1"/>
</dbReference>
<dbReference type="SUPFAM" id="SSF50486">
    <property type="entry name" value="FMT C-terminal domain-like"/>
    <property type="match status" value="1"/>
</dbReference>
<dbReference type="SUPFAM" id="SSF53328">
    <property type="entry name" value="Formyltransferase"/>
    <property type="match status" value="1"/>
</dbReference>
<accession>A5FNN7</accession>
<protein>
    <recommendedName>
        <fullName evidence="1">Methionyl-tRNA formyltransferase</fullName>
        <ecNumber evidence="1">2.1.2.9</ecNumber>
    </recommendedName>
</protein>
<organism>
    <name type="scientific">Flavobacterium johnsoniae (strain ATCC 17061 / DSM 2064 / JCM 8514 / BCRC 14874 / CCUG 350202 / NBRC 14942 / NCIMB 11054 / UW101)</name>
    <name type="common">Cytophaga johnsonae</name>
    <dbReference type="NCBI Taxonomy" id="376686"/>
    <lineage>
        <taxon>Bacteria</taxon>
        <taxon>Pseudomonadati</taxon>
        <taxon>Bacteroidota</taxon>
        <taxon>Flavobacteriia</taxon>
        <taxon>Flavobacteriales</taxon>
        <taxon>Flavobacteriaceae</taxon>
        <taxon>Flavobacterium</taxon>
    </lineage>
</organism>